<keyword id="KW-0165">Cleavage on pair of basic residues</keyword>
<keyword id="KW-0204">Cytolysis</keyword>
<keyword id="KW-0903">Direct protein sequencing</keyword>
<keyword id="KW-0406">Ion transport</keyword>
<keyword id="KW-0472">Membrane</keyword>
<keyword id="KW-0166">Nematocyst</keyword>
<keyword id="KW-0964">Secreted</keyword>
<keyword id="KW-0732">Signal</keyword>
<keyword id="KW-1052">Target cell membrane</keyword>
<keyword id="KW-1053">Target membrane</keyword>
<keyword id="KW-0800">Toxin</keyword>
<keyword id="KW-0812">Transmembrane</keyword>
<keyword id="KW-0813">Transport</keyword>
<reference key="1">
    <citation type="journal article" date="2002" name="Biosci. Biotechnol. Biochem.">
        <title>A new polypeptide toxin from the nematocyst venom of an Okinawan sea anemone Phyllodiscus semoni (Japanese name 'unbachi-isoginchaku').</title>
        <authorList>
            <person name="Nagai H."/>
            <person name="Oshiro N."/>
            <person name="Takuwa-Kuroda K."/>
            <person name="Iwanaga S."/>
            <person name="Nozaki M."/>
            <person name="Nakajima T."/>
        </authorList>
    </citation>
    <scope>NUCLEOTIDE SEQUENCE [MRNA]</scope>
    <scope>PROTEIN SEQUENCE OF 48-96</scope>
    <scope>TOXIC DOSE</scope>
    <source>
        <tissue>Nematoblast</tissue>
    </source>
</reference>
<reference key="2">
    <citation type="journal article" date="2009" name="Toxicon">
        <title>Molecular mechanism of pore formation by actinoporins.</title>
        <authorList>
            <person name="Kristan K.C."/>
            <person name="Viero G."/>
            <person name="Dalla Serra M."/>
            <person name="Macek P."/>
            <person name="Anderluh G."/>
        </authorList>
    </citation>
    <scope>REVIEW</scope>
</reference>
<reference key="3">
    <citation type="journal article" date="2012" name="Toxicon">
        <title>Development of a rational nomenclature for naming peptide and protein toxins from sea anemones.</title>
        <authorList>
            <person name="Oliveira J.S."/>
            <person name="Fuentes-Silva D."/>
            <person name="King G.F."/>
        </authorList>
    </citation>
    <scope>NOMENCLATURE</scope>
</reference>
<name>ACTP1_PHYSE</name>
<evidence type="ECO:0000250" key="1">
    <source>
        <dbReference type="UniProtKB" id="B9W5G6"/>
    </source>
</evidence>
<evidence type="ECO:0000250" key="2">
    <source>
        <dbReference type="UniProtKB" id="P07845"/>
    </source>
</evidence>
<evidence type="ECO:0000250" key="3">
    <source>
        <dbReference type="UniProtKB" id="P61914"/>
    </source>
</evidence>
<evidence type="ECO:0000255" key="4"/>
<evidence type="ECO:0000269" key="5">
    <source>
    </source>
</evidence>
<evidence type="ECO:0000303" key="6">
    <source>
    </source>
</evidence>
<evidence type="ECO:0000303" key="7">
    <source>
    </source>
</evidence>
<evidence type="ECO:0000305" key="8"/>
<sequence length="226" mass="25115">MRHFVVFLYMFLALSIPTAFAKKHIVTKKGNHQDITNDNEGENAEKKSAAVAGAVIAGGELALKILTKILDEIGKIDRKIAIGVDNESGLKWTALNTYYKSGASDVTLPYEVENSKALLYTARKSKGPVARGAVGVLAYKMSSGNTLAVMFSVPFDYNLYTNWWNVKIYDGEKKADEKMYNELYNNNNPIKPSIWEKRDLGQDGLKLRGFMTSNGDAKLVIHIEKS</sequence>
<organism>
    <name type="scientific">Phyllodiscus semoni</name>
    <name type="common">Night anemone</name>
    <dbReference type="NCBI Taxonomy" id="163701"/>
    <lineage>
        <taxon>Eukaryota</taxon>
        <taxon>Metazoa</taxon>
        <taxon>Cnidaria</taxon>
        <taxon>Anthozoa</taxon>
        <taxon>Hexacorallia</taxon>
        <taxon>Actiniaria</taxon>
        <taxon>Nynantheae</taxon>
        <taxon>Aliciidae</taxon>
        <taxon>Phyllodiscus</taxon>
    </lineage>
</organism>
<comment type="function">
    <text>Pore-forming protein that forms cations-selective hydrophilic pores of around 1 nm and causes cytolysis. Pore formation is a multi-step process that involves specific recognition of membrane sphingomyelin (but neither cholesterol nor phosphatidylcholine) using aromatic rich region and adjacent phosphocholine (POC) binding site, firm binding to the membrane (mainly driven by hydrophobic interactions) accompanied by the transfer of the N-terminal region to the lipid-water interface and finally pore formation after oligomerization of monomers.</text>
</comment>
<comment type="subunit">
    <text evidence="1">Octamer or nonamer in membranes. Monomer in the soluble state.</text>
</comment>
<comment type="subcellular location">
    <subcellularLocation>
        <location evidence="1">Secreted</location>
    </subcellularLocation>
    <subcellularLocation>
        <location evidence="2">Nematocyst</location>
    </subcellularLocation>
    <subcellularLocation>
        <location evidence="1">Target cell membrane</location>
    </subcellularLocation>
    <text evidence="1">Forms an alpha-helical membrane channel in the prey.</text>
</comment>
<comment type="domain">
    <text evidence="3">Composed of a long N-terminal alpha-helix and a core region rich in beta-sheet structures. Before the pore formation, the alpha-helix binds the lipid membrane, partitions into the lipid-water interface and stabilizes the monomeric molecule on the membrane. Finally, it traverses the bilayer, thus forming the transmembrane pore.</text>
</comment>
<comment type="toxic dose">
    <text evidence="5">LD(50) is 50 ug/kg to the shrimp P.paucidens (i.p.).</text>
</comment>
<comment type="similarity">
    <text evidence="8">Belongs to the actinoporin family. Sea anemone subfamily.</text>
</comment>
<dbReference type="EMBL" id="AB063314">
    <property type="protein sequence ID" value="BAC45007.1"/>
    <property type="molecule type" value="mRNA"/>
</dbReference>
<dbReference type="SMR" id="P0DL55"/>
<dbReference type="GO" id="GO:0005576">
    <property type="term" value="C:extracellular region"/>
    <property type="evidence" value="ECO:0007669"/>
    <property type="project" value="UniProtKB-SubCell"/>
</dbReference>
<dbReference type="GO" id="GO:0042151">
    <property type="term" value="C:nematocyst"/>
    <property type="evidence" value="ECO:0007669"/>
    <property type="project" value="UniProtKB-SubCell"/>
</dbReference>
<dbReference type="GO" id="GO:0044218">
    <property type="term" value="C:other organism cell membrane"/>
    <property type="evidence" value="ECO:0007669"/>
    <property type="project" value="UniProtKB-KW"/>
</dbReference>
<dbReference type="GO" id="GO:0046930">
    <property type="term" value="C:pore complex"/>
    <property type="evidence" value="ECO:0007669"/>
    <property type="project" value="InterPro"/>
</dbReference>
<dbReference type="GO" id="GO:0015267">
    <property type="term" value="F:channel activity"/>
    <property type="evidence" value="ECO:0007669"/>
    <property type="project" value="InterPro"/>
</dbReference>
<dbReference type="GO" id="GO:0090729">
    <property type="term" value="F:toxin activity"/>
    <property type="evidence" value="ECO:0007669"/>
    <property type="project" value="UniProtKB-KW"/>
</dbReference>
<dbReference type="GO" id="GO:0051715">
    <property type="term" value="P:cytolysis in another organism"/>
    <property type="evidence" value="ECO:0007669"/>
    <property type="project" value="InterPro"/>
</dbReference>
<dbReference type="GO" id="GO:0006812">
    <property type="term" value="P:monoatomic cation transport"/>
    <property type="evidence" value="ECO:0007669"/>
    <property type="project" value="InterPro"/>
</dbReference>
<dbReference type="GO" id="GO:0046931">
    <property type="term" value="P:pore complex assembly"/>
    <property type="evidence" value="ECO:0007669"/>
    <property type="project" value="InterPro"/>
</dbReference>
<dbReference type="FunFam" id="2.60.270.20:FF:000001">
    <property type="entry name" value="DELTA-actitoxin-Afr1a"/>
    <property type="match status" value="1"/>
</dbReference>
<dbReference type="Gene3D" id="2.60.270.20">
    <property type="entry name" value="Cytolysin/lectin"/>
    <property type="match status" value="1"/>
</dbReference>
<dbReference type="InterPro" id="IPR050677">
    <property type="entry name" value="Actinoporin_PFT"/>
</dbReference>
<dbReference type="InterPro" id="IPR009104">
    <property type="entry name" value="Anemon_actinoporin-like"/>
</dbReference>
<dbReference type="InterPro" id="IPR015926">
    <property type="entry name" value="Cytolysin/lectin"/>
</dbReference>
<dbReference type="PANTHER" id="PTHR40388">
    <property type="entry name" value="BRYOPORIN"/>
    <property type="match status" value="1"/>
</dbReference>
<dbReference type="PANTHER" id="PTHR40388:SF1">
    <property type="entry name" value="BRYOPORIN"/>
    <property type="match status" value="1"/>
</dbReference>
<dbReference type="Pfam" id="PF06369">
    <property type="entry name" value="Anemone_cytotox"/>
    <property type="match status" value="1"/>
</dbReference>
<dbReference type="SUPFAM" id="SSF63724">
    <property type="entry name" value="Cytolysin/lectin"/>
    <property type="match status" value="1"/>
</dbReference>
<feature type="signal peptide" evidence="4">
    <location>
        <begin position="1"/>
        <end position="21"/>
    </location>
</feature>
<feature type="propeptide" id="PRO_0000034838" evidence="5">
    <location>
        <begin position="22"/>
        <end position="45"/>
    </location>
</feature>
<feature type="chain" id="PRO_0000034839" description="DELTA-alicitoxin-Pse1a">
    <location>
        <begin position="48"/>
        <end position="226"/>
    </location>
</feature>
<feature type="region of interest" description="Plays an important role in the hemolytic activity" evidence="2">
    <location>
        <begin position="50"/>
        <end position="59"/>
    </location>
</feature>
<feature type="region of interest" description="N-terminal region" evidence="3">
    <location>
        <begin position="58"/>
        <end position="77"/>
    </location>
</feature>
<feature type="region of interest" description="Trp-rich region, which is important for the binding to lipid membrane" evidence="3">
    <location>
        <begin position="152"/>
        <end position="167"/>
    </location>
</feature>
<feature type="binding site" evidence="2">
    <location>
        <position position="101"/>
    </location>
    <ligand>
        <name>phosphocholine</name>
        <dbReference type="ChEBI" id="CHEBI:295975"/>
    </ligand>
</feature>
<feature type="binding site" evidence="2">
    <location>
        <position position="134"/>
    </location>
    <ligand>
        <name>phosphocholine</name>
        <dbReference type="ChEBI" id="CHEBI:295975"/>
    </ligand>
</feature>
<feature type="binding site" evidence="2">
    <location>
        <position position="152"/>
    </location>
    <ligand>
        <name>phosphocholine</name>
        <dbReference type="ChEBI" id="CHEBI:295975"/>
    </ligand>
</feature>
<feature type="binding site" evidence="2">
    <location>
        <position position="154"/>
    </location>
    <ligand>
        <name>phosphocholine</name>
        <dbReference type="ChEBI" id="CHEBI:295975"/>
    </ligand>
</feature>
<feature type="binding site" evidence="2">
    <location>
        <position position="180"/>
    </location>
    <ligand>
        <name>phosphocholine</name>
        <dbReference type="ChEBI" id="CHEBI:295975"/>
    </ligand>
</feature>
<feature type="binding site" evidence="2">
    <location>
        <position position="184"/>
    </location>
    <ligand>
        <name>phosphocholine</name>
        <dbReference type="ChEBI" id="CHEBI:295975"/>
    </ligand>
</feature>
<feature type="site" description="Important in the initial contact with the lipid membrane" evidence="3">
    <location>
        <position position="160"/>
    </location>
</feature>
<protein>
    <recommendedName>
        <fullName evidence="7">DELTA-alicitoxin-Pse1a</fullName>
        <shortName evidence="7">DELTA-ALTX-Pse1a</shortName>
    </recommendedName>
    <alternativeName>
        <fullName evidence="6">Cytolysin PsTX-20A</fullName>
        <shortName>Pstx20</shortName>
        <shortName>ptx20a</shortName>
    </alternativeName>
</protein>
<accession>P0DL55</accession>
<accession>D2YZQ4</accession>
<accession>Q8IAE2</accession>
<proteinExistence type="evidence at protein level"/>